<keyword id="KW-0067">ATP-binding</keyword>
<keyword id="KW-0963">Cytoplasm</keyword>
<keyword id="KW-0418">Kinase</keyword>
<keyword id="KW-0547">Nucleotide-binding</keyword>
<keyword id="KW-0665">Pyrimidine biosynthesis</keyword>
<keyword id="KW-1185">Reference proteome</keyword>
<keyword id="KW-0808">Transferase</keyword>
<gene>
    <name evidence="1" type="primary">pyrH</name>
    <name type="ordered locus">TTE1407</name>
</gene>
<name>PYRH_CALS4</name>
<organism>
    <name type="scientific">Caldanaerobacter subterraneus subsp. tengcongensis (strain DSM 15242 / JCM 11007 / NBRC 100824 / MB4)</name>
    <name type="common">Thermoanaerobacter tengcongensis</name>
    <dbReference type="NCBI Taxonomy" id="273068"/>
    <lineage>
        <taxon>Bacteria</taxon>
        <taxon>Bacillati</taxon>
        <taxon>Bacillota</taxon>
        <taxon>Clostridia</taxon>
        <taxon>Thermoanaerobacterales</taxon>
        <taxon>Thermoanaerobacteraceae</taxon>
        <taxon>Caldanaerobacter</taxon>
    </lineage>
</organism>
<protein>
    <recommendedName>
        <fullName evidence="1">Uridylate kinase</fullName>
        <shortName evidence="1">UK</shortName>
        <ecNumber evidence="1">2.7.4.22</ecNumber>
    </recommendedName>
    <alternativeName>
        <fullName evidence="1">Uridine monophosphate kinase</fullName>
        <shortName evidence="1">UMP kinase</shortName>
        <shortName evidence="1">UMPK</shortName>
    </alternativeName>
</protein>
<accession>Q8RA23</accession>
<dbReference type="EC" id="2.7.4.22" evidence="1"/>
<dbReference type="EMBL" id="AE008691">
    <property type="protein sequence ID" value="AAM24629.1"/>
    <property type="molecule type" value="Genomic_DNA"/>
</dbReference>
<dbReference type="RefSeq" id="WP_009611037.1">
    <property type="nucleotide sequence ID" value="NC_003869.1"/>
</dbReference>
<dbReference type="SMR" id="Q8RA23"/>
<dbReference type="STRING" id="273068.TTE1407"/>
<dbReference type="KEGG" id="tte:TTE1407"/>
<dbReference type="eggNOG" id="COG0528">
    <property type="taxonomic scope" value="Bacteria"/>
</dbReference>
<dbReference type="HOGENOM" id="CLU_033861_0_0_9"/>
<dbReference type="OrthoDB" id="9807458at2"/>
<dbReference type="UniPathway" id="UPA00159">
    <property type="reaction ID" value="UER00275"/>
</dbReference>
<dbReference type="Proteomes" id="UP000000555">
    <property type="component" value="Chromosome"/>
</dbReference>
<dbReference type="GO" id="GO:0005737">
    <property type="term" value="C:cytoplasm"/>
    <property type="evidence" value="ECO:0007669"/>
    <property type="project" value="UniProtKB-SubCell"/>
</dbReference>
<dbReference type="GO" id="GO:0005524">
    <property type="term" value="F:ATP binding"/>
    <property type="evidence" value="ECO:0007669"/>
    <property type="project" value="UniProtKB-KW"/>
</dbReference>
<dbReference type="GO" id="GO:0033862">
    <property type="term" value="F:UMP kinase activity"/>
    <property type="evidence" value="ECO:0007669"/>
    <property type="project" value="UniProtKB-EC"/>
</dbReference>
<dbReference type="GO" id="GO:0044210">
    <property type="term" value="P:'de novo' CTP biosynthetic process"/>
    <property type="evidence" value="ECO:0007669"/>
    <property type="project" value="UniProtKB-UniRule"/>
</dbReference>
<dbReference type="GO" id="GO:0006225">
    <property type="term" value="P:UDP biosynthetic process"/>
    <property type="evidence" value="ECO:0007669"/>
    <property type="project" value="TreeGrafter"/>
</dbReference>
<dbReference type="CDD" id="cd04254">
    <property type="entry name" value="AAK_UMPK-PyrH-Ec"/>
    <property type="match status" value="1"/>
</dbReference>
<dbReference type="FunFam" id="3.40.1160.10:FF:000001">
    <property type="entry name" value="Uridylate kinase"/>
    <property type="match status" value="1"/>
</dbReference>
<dbReference type="Gene3D" id="3.40.1160.10">
    <property type="entry name" value="Acetylglutamate kinase-like"/>
    <property type="match status" value="1"/>
</dbReference>
<dbReference type="HAMAP" id="MF_01220_B">
    <property type="entry name" value="PyrH_B"/>
    <property type="match status" value="1"/>
</dbReference>
<dbReference type="InterPro" id="IPR036393">
    <property type="entry name" value="AceGlu_kinase-like_sf"/>
</dbReference>
<dbReference type="InterPro" id="IPR001048">
    <property type="entry name" value="Asp/Glu/Uridylate_kinase"/>
</dbReference>
<dbReference type="InterPro" id="IPR011817">
    <property type="entry name" value="Uridylate_kinase"/>
</dbReference>
<dbReference type="InterPro" id="IPR015963">
    <property type="entry name" value="Uridylate_kinase_bac"/>
</dbReference>
<dbReference type="NCBIfam" id="TIGR02075">
    <property type="entry name" value="pyrH_bact"/>
    <property type="match status" value="1"/>
</dbReference>
<dbReference type="PANTHER" id="PTHR42833">
    <property type="entry name" value="URIDYLATE KINASE"/>
    <property type="match status" value="1"/>
</dbReference>
<dbReference type="PANTHER" id="PTHR42833:SF4">
    <property type="entry name" value="URIDYLATE KINASE PUMPKIN, CHLOROPLASTIC"/>
    <property type="match status" value="1"/>
</dbReference>
<dbReference type="Pfam" id="PF00696">
    <property type="entry name" value="AA_kinase"/>
    <property type="match status" value="1"/>
</dbReference>
<dbReference type="PIRSF" id="PIRSF005650">
    <property type="entry name" value="Uridylate_kin"/>
    <property type="match status" value="1"/>
</dbReference>
<dbReference type="SUPFAM" id="SSF53633">
    <property type="entry name" value="Carbamate kinase-like"/>
    <property type="match status" value="1"/>
</dbReference>
<sequence>MSSVVYKRVVLKISGEALAGDKEFGIDFNVVNRIADEIKEVRDLGVQIGLVVGGGNIWRGRDAVGMDRTTADHMGMLATVINALALQDALEQRGVPTRVQTAIEMRAIAEPYIRRRAIRHLEKGRVVIFAAGTGNPFFSTDTAASLRAAEIDAEVILLAKKVDGVYDKDPLKHKDAVKFKELSYLDVLNKGLGVMDSTATSLCMDNKIPIIVFDLTTYGNIKKVVMGNDIGTIVKEG</sequence>
<comment type="function">
    <text evidence="1">Catalyzes the reversible phosphorylation of UMP to UDP.</text>
</comment>
<comment type="catalytic activity">
    <reaction evidence="1">
        <text>UMP + ATP = UDP + ADP</text>
        <dbReference type="Rhea" id="RHEA:24400"/>
        <dbReference type="ChEBI" id="CHEBI:30616"/>
        <dbReference type="ChEBI" id="CHEBI:57865"/>
        <dbReference type="ChEBI" id="CHEBI:58223"/>
        <dbReference type="ChEBI" id="CHEBI:456216"/>
        <dbReference type="EC" id="2.7.4.22"/>
    </reaction>
</comment>
<comment type="activity regulation">
    <text evidence="1">Inhibited by UTP.</text>
</comment>
<comment type="pathway">
    <text evidence="1">Pyrimidine metabolism; CTP biosynthesis via de novo pathway; UDP from UMP (UMPK route): step 1/1.</text>
</comment>
<comment type="subunit">
    <text evidence="1">Homohexamer.</text>
</comment>
<comment type="subcellular location">
    <subcellularLocation>
        <location evidence="1">Cytoplasm</location>
    </subcellularLocation>
</comment>
<comment type="similarity">
    <text evidence="1">Belongs to the UMP kinase family.</text>
</comment>
<feature type="chain" id="PRO_0000143901" description="Uridylate kinase">
    <location>
        <begin position="1"/>
        <end position="237"/>
    </location>
</feature>
<feature type="binding site" evidence="1">
    <location>
        <begin position="12"/>
        <end position="15"/>
    </location>
    <ligand>
        <name>ATP</name>
        <dbReference type="ChEBI" id="CHEBI:30616"/>
    </ligand>
</feature>
<feature type="binding site" evidence="1">
    <location>
        <position position="54"/>
    </location>
    <ligand>
        <name>UMP</name>
        <dbReference type="ChEBI" id="CHEBI:57865"/>
    </ligand>
</feature>
<feature type="binding site" evidence="1">
    <location>
        <position position="55"/>
    </location>
    <ligand>
        <name>ATP</name>
        <dbReference type="ChEBI" id="CHEBI:30616"/>
    </ligand>
</feature>
<feature type="binding site" evidence="1">
    <location>
        <position position="59"/>
    </location>
    <ligand>
        <name>ATP</name>
        <dbReference type="ChEBI" id="CHEBI:30616"/>
    </ligand>
</feature>
<feature type="binding site" evidence="1">
    <location>
        <position position="72"/>
    </location>
    <ligand>
        <name>UMP</name>
        <dbReference type="ChEBI" id="CHEBI:57865"/>
    </ligand>
</feature>
<feature type="binding site" evidence="1">
    <location>
        <begin position="133"/>
        <end position="140"/>
    </location>
    <ligand>
        <name>UMP</name>
        <dbReference type="ChEBI" id="CHEBI:57865"/>
    </ligand>
</feature>
<feature type="binding site" evidence="1">
    <location>
        <position position="166"/>
    </location>
    <ligand>
        <name>ATP</name>
        <dbReference type="ChEBI" id="CHEBI:30616"/>
    </ligand>
</feature>
<feature type="binding site" evidence="1">
    <location>
        <position position="169"/>
    </location>
    <ligand>
        <name>ATP</name>
        <dbReference type="ChEBI" id="CHEBI:30616"/>
    </ligand>
</feature>
<reference key="1">
    <citation type="journal article" date="2002" name="Genome Res.">
        <title>A complete sequence of the T. tengcongensis genome.</title>
        <authorList>
            <person name="Bao Q."/>
            <person name="Tian Y."/>
            <person name="Li W."/>
            <person name="Xu Z."/>
            <person name="Xuan Z."/>
            <person name="Hu S."/>
            <person name="Dong W."/>
            <person name="Yang J."/>
            <person name="Chen Y."/>
            <person name="Xue Y."/>
            <person name="Xu Y."/>
            <person name="Lai X."/>
            <person name="Huang L."/>
            <person name="Dong X."/>
            <person name="Ma Y."/>
            <person name="Ling L."/>
            <person name="Tan H."/>
            <person name="Chen R."/>
            <person name="Wang J."/>
            <person name="Yu J."/>
            <person name="Yang H."/>
        </authorList>
    </citation>
    <scope>NUCLEOTIDE SEQUENCE [LARGE SCALE GENOMIC DNA]</scope>
    <source>
        <strain>DSM 15242 / JCM 11007 / NBRC 100824 / MB4</strain>
    </source>
</reference>
<evidence type="ECO:0000255" key="1">
    <source>
        <dbReference type="HAMAP-Rule" id="MF_01220"/>
    </source>
</evidence>
<proteinExistence type="inferred from homology"/>